<reference key="1">
    <citation type="submission" date="2005-08" db="EMBL/GenBank/DDBJ databases">
        <authorList>
            <consortium name="NIH - Mammalian Gene Collection (MGC) project"/>
        </authorList>
    </citation>
    <scope>NUCLEOTIDE SEQUENCE [LARGE SCALE MRNA]</scope>
    <source>
        <strain>Crossbred X Angus</strain>
        <tissue>Ileum</tissue>
    </source>
</reference>
<name>PHB1_BOVIN</name>
<keyword id="KW-0007">Acetylation</keyword>
<keyword id="KW-1003">Cell membrane</keyword>
<keyword id="KW-0175">Coiled coil</keyword>
<keyword id="KW-0963">Cytoplasm</keyword>
<keyword id="KW-0237">DNA synthesis</keyword>
<keyword id="KW-0472">Membrane</keyword>
<keyword id="KW-0496">Mitochondrion</keyword>
<keyword id="KW-0999">Mitochondrion inner membrane</keyword>
<keyword id="KW-0539">Nucleus</keyword>
<keyword id="KW-0597">Phosphoprotein</keyword>
<keyword id="KW-1185">Reference proteome</keyword>
<sequence length="272" mass="29804">MAAKVFESIGKFGLALAVAGGVVNSALYNVDAGHRAVIFDRFRGVQDIVVGEGTHFLIPWVQKPIIFDCRSRPRNVPVITGSKDLQNVNITLRILFRPVASQLPRIFTSIGEDYDERVLPSITTEILKSVVARFDAGELITQRELVSRQVSDDLTERAATFGLILDDVSLTHLTFGKEFTEAVEAKQVAQQEAERARFVVEKAEQQKKAAIISAEGDSKAAELIANSLATAGDGLIELRKLEAAEDIAYQLSRSRNITYLPAGQSVLLQLPQ</sequence>
<proteinExistence type="evidence at transcript level"/>
<protein>
    <recommendedName>
        <fullName>Prohibitin 1</fullName>
    </recommendedName>
</protein>
<dbReference type="EMBL" id="BC102094">
    <property type="protein sequence ID" value="AAI02095.1"/>
    <property type="molecule type" value="mRNA"/>
</dbReference>
<dbReference type="RefSeq" id="NP_001029744.1">
    <property type="nucleotide sequence ID" value="NM_001034572.2"/>
</dbReference>
<dbReference type="RefSeq" id="XP_005220626.1">
    <property type="nucleotide sequence ID" value="XM_005220569.4"/>
</dbReference>
<dbReference type="RefSeq" id="XP_059734088.1">
    <property type="nucleotide sequence ID" value="XM_059878105.1"/>
</dbReference>
<dbReference type="RefSeq" id="XP_059734089.1">
    <property type="nucleotide sequence ID" value="XM_059878106.1"/>
</dbReference>
<dbReference type="SMR" id="Q3T165"/>
<dbReference type="FunCoup" id="Q3T165">
    <property type="interactions" value="2731"/>
</dbReference>
<dbReference type="STRING" id="9913.ENSBTAP00000065386"/>
<dbReference type="SwissPalm" id="Q3T165"/>
<dbReference type="PaxDb" id="9913-ENSBTAP00000022759"/>
<dbReference type="PeptideAtlas" id="Q3T165"/>
<dbReference type="Ensembl" id="ENSBTAT00000022759.5">
    <property type="protein sequence ID" value="ENSBTAP00000022759.3"/>
    <property type="gene ID" value="ENSBTAG00000017120.5"/>
</dbReference>
<dbReference type="GeneID" id="530409"/>
<dbReference type="KEGG" id="bta:530409"/>
<dbReference type="CTD" id="5245"/>
<dbReference type="VEuPathDB" id="HostDB:ENSBTAG00000017120"/>
<dbReference type="VGNC" id="VGNC:32808">
    <property type="gene designation" value="PHB1"/>
</dbReference>
<dbReference type="eggNOG" id="KOG3083">
    <property type="taxonomic scope" value="Eukaryota"/>
</dbReference>
<dbReference type="GeneTree" id="ENSGT00950000183070"/>
<dbReference type="HOGENOM" id="CLU_047969_0_0_1"/>
<dbReference type="InParanoid" id="Q3T165"/>
<dbReference type="OMA" id="YEFRLVT"/>
<dbReference type="OrthoDB" id="275637at2759"/>
<dbReference type="TreeFam" id="TF300095"/>
<dbReference type="Reactome" id="R-BTA-5673000">
    <property type="pathway name" value="RAF activation"/>
</dbReference>
<dbReference type="Reactome" id="R-BTA-8949664">
    <property type="pathway name" value="Processing of SMDT1"/>
</dbReference>
<dbReference type="Proteomes" id="UP000009136">
    <property type="component" value="Chromosome 19"/>
</dbReference>
<dbReference type="Bgee" id="ENSBTAG00000017120">
    <property type="expression patterns" value="Expressed in diaphragm and 106 other cell types or tissues"/>
</dbReference>
<dbReference type="GO" id="GO:0009986">
    <property type="term" value="C:cell surface"/>
    <property type="evidence" value="ECO:0000250"/>
    <property type="project" value="UniProtKB"/>
</dbReference>
<dbReference type="GO" id="GO:0005737">
    <property type="term" value="C:cytoplasm"/>
    <property type="evidence" value="ECO:0000250"/>
    <property type="project" value="UniProtKB"/>
</dbReference>
<dbReference type="GO" id="GO:0005743">
    <property type="term" value="C:mitochondrial inner membrane"/>
    <property type="evidence" value="ECO:0000250"/>
    <property type="project" value="UniProtKB"/>
</dbReference>
<dbReference type="GO" id="GO:0035632">
    <property type="term" value="C:mitochondrial prohibitin complex"/>
    <property type="evidence" value="ECO:0000250"/>
    <property type="project" value="UniProtKB"/>
</dbReference>
<dbReference type="GO" id="GO:0005739">
    <property type="term" value="C:mitochondrion"/>
    <property type="evidence" value="ECO:0000250"/>
    <property type="project" value="UniProtKB"/>
</dbReference>
<dbReference type="GO" id="GO:0005634">
    <property type="term" value="C:nucleus"/>
    <property type="evidence" value="ECO:0000250"/>
    <property type="project" value="UniProtKB"/>
</dbReference>
<dbReference type="GO" id="GO:0005886">
    <property type="term" value="C:plasma membrane"/>
    <property type="evidence" value="ECO:0000250"/>
    <property type="project" value="UniProtKB"/>
</dbReference>
<dbReference type="GO" id="GO:0042113">
    <property type="term" value="P:B cell activation"/>
    <property type="evidence" value="ECO:0000250"/>
    <property type="project" value="UniProtKB"/>
</dbReference>
<dbReference type="GO" id="GO:0071897">
    <property type="term" value="P:DNA biosynthetic process"/>
    <property type="evidence" value="ECO:0007669"/>
    <property type="project" value="UniProtKB-KW"/>
</dbReference>
<dbReference type="GO" id="GO:0007005">
    <property type="term" value="P:mitochondrion organization"/>
    <property type="evidence" value="ECO:0000318"/>
    <property type="project" value="GO_Central"/>
</dbReference>
<dbReference type="GO" id="GO:0002639">
    <property type="term" value="P:positive regulation of immunoglobulin production"/>
    <property type="evidence" value="ECO:0000250"/>
    <property type="project" value="UniProtKB"/>
</dbReference>
<dbReference type="GO" id="GO:0032740">
    <property type="term" value="P:positive regulation of interleukin-17 production"/>
    <property type="evidence" value="ECO:0000250"/>
    <property type="project" value="UniProtKB"/>
</dbReference>
<dbReference type="GO" id="GO:1901224">
    <property type="term" value="P:positive regulation of non-canonical NF-kappaB signal transduction"/>
    <property type="evidence" value="ECO:0000250"/>
    <property type="project" value="UniProtKB"/>
</dbReference>
<dbReference type="GO" id="GO:0051897">
    <property type="term" value="P:positive regulation of phosphatidylinositol 3-kinase/protein kinase B signal transduction"/>
    <property type="evidence" value="ECO:0000250"/>
    <property type="project" value="UniProtKB"/>
</dbReference>
<dbReference type="GO" id="GO:0048661">
    <property type="term" value="P:positive regulation of smooth muscle cell proliferation"/>
    <property type="evidence" value="ECO:0000250"/>
    <property type="project" value="UniProtKB"/>
</dbReference>
<dbReference type="GO" id="GO:0072538">
    <property type="term" value="P:T-helper 17 type immune response"/>
    <property type="evidence" value="ECO:0000250"/>
    <property type="project" value="UniProtKB"/>
</dbReference>
<dbReference type="CDD" id="cd03401">
    <property type="entry name" value="SPFH_prohibitin"/>
    <property type="match status" value="1"/>
</dbReference>
<dbReference type="FunFam" id="3.30.479.30:FF:000001">
    <property type="entry name" value="Prohibitin 2"/>
    <property type="match status" value="1"/>
</dbReference>
<dbReference type="Gene3D" id="3.30.479.30">
    <property type="entry name" value="Band 7 domain"/>
    <property type="match status" value="1"/>
</dbReference>
<dbReference type="InterPro" id="IPR001107">
    <property type="entry name" value="Band_7"/>
</dbReference>
<dbReference type="InterPro" id="IPR036013">
    <property type="entry name" value="Band_7/SPFH_dom_sf"/>
</dbReference>
<dbReference type="InterPro" id="IPR000163">
    <property type="entry name" value="Prohibitin"/>
</dbReference>
<dbReference type="PANTHER" id="PTHR23222">
    <property type="entry name" value="PROHIBITIN"/>
    <property type="match status" value="1"/>
</dbReference>
<dbReference type="PANTHER" id="PTHR23222:SF0">
    <property type="entry name" value="PROHIBITIN 1"/>
    <property type="match status" value="1"/>
</dbReference>
<dbReference type="Pfam" id="PF01145">
    <property type="entry name" value="Band_7"/>
    <property type="match status" value="1"/>
</dbReference>
<dbReference type="PRINTS" id="PR00679">
    <property type="entry name" value="PROHIBITIN"/>
</dbReference>
<dbReference type="SMART" id="SM00244">
    <property type="entry name" value="PHB"/>
    <property type="match status" value="1"/>
</dbReference>
<dbReference type="SUPFAM" id="SSF117892">
    <property type="entry name" value="Band 7/SPFH domain"/>
    <property type="match status" value="1"/>
</dbReference>
<gene>
    <name type="primary">PHB1</name>
    <name type="synonym">PHB</name>
</gene>
<accession>Q3T165</accession>
<feature type="initiator methionine" description="Removed" evidence="1">
    <location>
        <position position="1"/>
    </location>
</feature>
<feature type="chain" id="PRO_0000223489" description="Prohibitin 1">
    <location>
        <begin position="2"/>
        <end position="272"/>
    </location>
</feature>
<feature type="coiled-coil region" evidence="4">
    <location>
        <begin position="177"/>
        <end position="211"/>
    </location>
</feature>
<feature type="modified residue" description="N-acetylalanine" evidence="1">
    <location>
        <position position="2"/>
    </location>
</feature>
<feature type="modified residue" description="Phosphothreonine" evidence="1">
    <location>
        <position position="91"/>
    </location>
</feature>
<feature type="modified residue" description="N6-acetyllysine" evidence="2">
    <location>
        <position position="128"/>
    </location>
</feature>
<feature type="modified residue" description="N6-acetyllysine" evidence="2">
    <location>
        <position position="186"/>
    </location>
</feature>
<feature type="modified residue" description="N6-acetyllysine; alternate" evidence="1">
    <location>
        <position position="202"/>
    </location>
</feature>
<feature type="modified residue" description="N6-succinyllysine; alternate" evidence="2">
    <location>
        <position position="202"/>
    </location>
</feature>
<feature type="modified residue" description="Phosphotyrosine" evidence="1">
    <location>
        <position position="249"/>
    </location>
</feature>
<evidence type="ECO:0000250" key="1">
    <source>
        <dbReference type="UniProtKB" id="P35232"/>
    </source>
</evidence>
<evidence type="ECO:0000250" key="2">
    <source>
        <dbReference type="UniProtKB" id="P67778"/>
    </source>
</evidence>
<evidence type="ECO:0000250" key="3">
    <source>
        <dbReference type="UniProtKB" id="P67779"/>
    </source>
</evidence>
<evidence type="ECO:0000255" key="4"/>
<evidence type="ECO:0000305" key="5"/>
<organism>
    <name type="scientific">Bos taurus</name>
    <name type="common">Bovine</name>
    <dbReference type="NCBI Taxonomy" id="9913"/>
    <lineage>
        <taxon>Eukaryota</taxon>
        <taxon>Metazoa</taxon>
        <taxon>Chordata</taxon>
        <taxon>Craniata</taxon>
        <taxon>Vertebrata</taxon>
        <taxon>Euteleostomi</taxon>
        <taxon>Mammalia</taxon>
        <taxon>Eutheria</taxon>
        <taxon>Laurasiatheria</taxon>
        <taxon>Artiodactyla</taxon>
        <taxon>Ruminantia</taxon>
        <taxon>Pecora</taxon>
        <taxon>Bovidae</taxon>
        <taxon>Bovinae</taxon>
        <taxon>Bos</taxon>
    </lineage>
</organism>
<comment type="function">
    <text evidence="1 2 3">Protein with pleiotropic attributes mediated in a cell-compartment- and tissue-specific manner, which include the plasma membrane-associated cell signaling functions, mitochondrial chaperone, and transcriptional co-regulator of transcription factors in the nucleus (By similarity). Plays a role in adipose tissue and glucose homeostasis in a sex-specific manner (By similarity). Contributes to pulmonary vascular remodeling by accelerating proliferation of pulmonary arterial smooth muscle cells (By similarity).</text>
</comment>
<comment type="function">
    <text evidence="1 2">In the mitochondria, together with PHB2, forms large ring complexes (prohibitin complexes) in the inner mitochondrial membrane (IMM) and functions as a chaperone protein that stabilizes mitochondrial respiratory enzymes and maintains mitochondrial integrity in the IMM, which is required for mitochondrial morphogenesis, neuronal survival, and normal lifespan (By similarity). The prohibitin complex, with DNAJC19, regulates cardiolipin remodeling and the protein turnover of OMA1 in a cardiolipin-binding manner (By similarity). Regulates mitochondrial respiration activity playing a role in cellular aging. The prohibitin complex plays a role of mitophagy receptor involved in targeting mitochondria for autophagic degradation. Involved in mitochondrial-mediated antiviral innate immunity, activates RIG-I-mediated signal transduction and production of IFNB1 and proinflammatory cytokine IL6 (By similarity).</text>
</comment>
<comment type="function">
    <text evidence="1">In the nucleus, acts as a transcription coregulator, enhances promoter binding by TP53, a transcription factor it activates, but reduces the promoter binding by E2F1, a transcription factor it represses. Interacts with STAT3 to affect IL17 secretion in T-helper Th17 cells.</text>
</comment>
<comment type="function">
    <text evidence="2">In the plasma membrane, cooperates with CD86 to mediate CD86-signaling in B lymphocytes that regulates the level of IgG1 produced through the activation of distal signaling intermediates. Upon CD40 engagement, required to activate NF-kappa-B signaling pathway via phospholipase C and protein kinase C activation.</text>
</comment>
<comment type="subunit">
    <text evidence="1 2">The mitochondrial prohibitin complex consists of two subunits (PHB1 and PHB2), assembled into a membrane-associated ring-shaped supercomplex of approximately 1 mDa. Interacts with STOML2. Interacts with MAP1LC3B (membrane-bound form LC3-II); the interaction requires PHB2 and takes place upon Parkin-mediated mitochondrial damage. Interacts with STAT3 (unphosphorylated or phosphorylated at 'Ser-727'). Interacts with CLPB (By similarity). Interacts with CD86 (via cytoplasmic domain); the interactions increases after priming with CD40 (By similarity).</text>
</comment>
<comment type="subcellular location">
    <subcellularLocation>
        <location evidence="1">Mitochondrion inner membrane</location>
    </subcellularLocation>
    <subcellularLocation>
        <location evidence="1">Nucleus</location>
    </subcellularLocation>
    <subcellularLocation>
        <location evidence="1">Cytoplasm</location>
    </subcellularLocation>
    <subcellularLocation>
        <location evidence="1">Cell membrane</location>
    </subcellularLocation>
</comment>
<comment type="similarity">
    <text evidence="5">Belongs to the prohibitin family.</text>
</comment>